<gene>
    <name evidence="1" type="primary">frdC</name>
    <name type="ordered locus">YPDSF_3616</name>
</gene>
<protein>
    <recommendedName>
        <fullName evidence="1">Fumarate reductase subunit C</fullName>
    </recommendedName>
    <alternativeName>
        <fullName evidence="1">Fumarate reductase 15 kDa hydrophobic protein</fullName>
    </alternativeName>
    <alternativeName>
        <fullName evidence="1">Quinol-fumarate reductase subunit C</fullName>
        <shortName evidence="1">QFR subunit C</shortName>
    </alternativeName>
</protein>
<keyword id="KW-0997">Cell inner membrane</keyword>
<keyword id="KW-1003">Cell membrane</keyword>
<keyword id="KW-0472">Membrane</keyword>
<keyword id="KW-0812">Transmembrane</keyword>
<keyword id="KW-1133">Transmembrane helix</keyword>
<sequence>MTTKRKAYVRTMAPNWWQQLGFYRFYMLREGTSIPAVWFSVLLIYGVFALKSGPAGWEGFVSFLQNPLVLFLNILTLFAALLHTKTWFELAPKAVNIIVKSEKMGPEPMIKALWVVTVVASAIILAVALL</sequence>
<feature type="chain" id="PRO_1000045541" description="Fumarate reductase subunit C">
    <location>
        <begin position="1"/>
        <end position="130"/>
    </location>
</feature>
<feature type="transmembrane region" description="Helical" evidence="1">
    <location>
        <begin position="30"/>
        <end position="50"/>
    </location>
</feature>
<feature type="transmembrane region" description="Helical" evidence="1">
    <location>
        <begin position="60"/>
        <end position="80"/>
    </location>
</feature>
<feature type="transmembrane region" description="Helical" evidence="1">
    <location>
        <begin position="110"/>
        <end position="130"/>
    </location>
</feature>
<proteinExistence type="inferred from homology"/>
<dbReference type="EMBL" id="CP000668">
    <property type="protein sequence ID" value="ABP41966.1"/>
    <property type="molecule type" value="Genomic_DNA"/>
</dbReference>
<dbReference type="RefSeq" id="WP_002209135.1">
    <property type="nucleotide sequence ID" value="NZ_CP009715.1"/>
</dbReference>
<dbReference type="SMR" id="A4TRQ4"/>
<dbReference type="GeneID" id="57974250"/>
<dbReference type="KEGG" id="ypp:YPDSF_3616"/>
<dbReference type="PATRIC" id="fig|386656.14.peg.276"/>
<dbReference type="GO" id="GO:0045283">
    <property type="term" value="C:fumarate reductase complex"/>
    <property type="evidence" value="ECO:0007669"/>
    <property type="project" value="UniProtKB-UniRule"/>
</dbReference>
<dbReference type="GO" id="GO:0005886">
    <property type="term" value="C:plasma membrane"/>
    <property type="evidence" value="ECO:0007669"/>
    <property type="project" value="UniProtKB-SubCell"/>
</dbReference>
<dbReference type="GO" id="GO:0000104">
    <property type="term" value="F:succinate dehydrogenase activity"/>
    <property type="evidence" value="ECO:0007669"/>
    <property type="project" value="UniProtKB-UniRule"/>
</dbReference>
<dbReference type="CDD" id="cd00546">
    <property type="entry name" value="QFR_TypeD_subunitC"/>
    <property type="match status" value="1"/>
</dbReference>
<dbReference type="Gene3D" id="1.20.1300.10">
    <property type="entry name" value="Fumarate reductase/succinate dehydrogenase, transmembrane subunit"/>
    <property type="match status" value="1"/>
</dbReference>
<dbReference type="HAMAP" id="MF_00708">
    <property type="entry name" value="Fumarate_red_C"/>
    <property type="match status" value="1"/>
</dbReference>
<dbReference type="InterPro" id="IPR003510">
    <property type="entry name" value="Fumarate_red_C"/>
</dbReference>
<dbReference type="InterPro" id="IPR034804">
    <property type="entry name" value="SQR/QFR_C/D"/>
</dbReference>
<dbReference type="NCBIfam" id="NF003445">
    <property type="entry name" value="PRK04987.1"/>
    <property type="match status" value="1"/>
</dbReference>
<dbReference type="Pfam" id="PF02300">
    <property type="entry name" value="Fumarate_red_C"/>
    <property type="match status" value="1"/>
</dbReference>
<dbReference type="PIRSF" id="PIRSF000180">
    <property type="entry name" value="FrdC"/>
    <property type="match status" value="1"/>
</dbReference>
<dbReference type="SUPFAM" id="SSF81343">
    <property type="entry name" value="Fumarate reductase respiratory complex transmembrane subunits"/>
    <property type="match status" value="1"/>
</dbReference>
<comment type="function">
    <text evidence="1">Two distinct, membrane-bound, FAD-containing enzymes are responsible for the catalysis of fumarate and succinate interconversion; fumarate reductase is used in anaerobic growth, and succinate dehydrogenase is used in aerobic growth. Anchors the catalytic components of the fumarate reductase complex to the cell inner membrane, binds quinones.</text>
</comment>
<comment type="subunit">
    <text evidence="1">Part of an enzyme complex containing four subunits: a flavoprotein (FrdA), an iron-sulfur protein (FrdB), and two hydrophobic anchor proteins (FrdC and FrdD).</text>
</comment>
<comment type="subcellular location">
    <subcellularLocation>
        <location evidence="1">Cell inner membrane</location>
        <topology evidence="1">Multi-pass membrane protein</topology>
    </subcellularLocation>
</comment>
<comment type="similarity">
    <text evidence="1">Belongs to the FrdC family.</text>
</comment>
<evidence type="ECO:0000255" key="1">
    <source>
        <dbReference type="HAMAP-Rule" id="MF_00708"/>
    </source>
</evidence>
<name>FRDC_YERPP</name>
<organism>
    <name type="scientific">Yersinia pestis (strain Pestoides F)</name>
    <dbReference type="NCBI Taxonomy" id="386656"/>
    <lineage>
        <taxon>Bacteria</taxon>
        <taxon>Pseudomonadati</taxon>
        <taxon>Pseudomonadota</taxon>
        <taxon>Gammaproteobacteria</taxon>
        <taxon>Enterobacterales</taxon>
        <taxon>Yersiniaceae</taxon>
        <taxon>Yersinia</taxon>
    </lineage>
</organism>
<accession>A4TRQ4</accession>
<reference key="1">
    <citation type="submission" date="2007-02" db="EMBL/GenBank/DDBJ databases">
        <title>Complete sequence of chromosome of Yersinia pestis Pestoides F.</title>
        <authorList>
            <consortium name="US DOE Joint Genome Institute"/>
            <person name="Copeland A."/>
            <person name="Lucas S."/>
            <person name="Lapidus A."/>
            <person name="Barry K."/>
            <person name="Detter J.C."/>
            <person name="Glavina del Rio T."/>
            <person name="Hammon N."/>
            <person name="Israni S."/>
            <person name="Dalin E."/>
            <person name="Tice H."/>
            <person name="Pitluck S."/>
            <person name="Di Bartolo G."/>
            <person name="Chain P."/>
            <person name="Malfatti S."/>
            <person name="Shin M."/>
            <person name="Vergez L."/>
            <person name="Schmutz J."/>
            <person name="Larimer F."/>
            <person name="Land M."/>
            <person name="Hauser L."/>
            <person name="Worsham P."/>
            <person name="Chu M."/>
            <person name="Bearden S."/>
            <person name="Garcia E."/>
            <person name="Richardson P."/>
        </authorList>
    </citation>
    <scope>NUCLEOTIDE SEQUENCE [LARGE SCALE GENOMIC DNA]</scope>
    <source>
        <strain>Pestoides F</strain>
    </source>
</reference>